<protein>
    <recommendedName>
        <fullName>Protein Dok-7</fullName>
    </recommendedName>
    <alternativeName>
        <fullName>Downstream of tyrosine kinase 7</fullName>
    </alternativeName>
</protein>
<dbReference type="EMBL" id="AB220919">
    <property type="protein sequence ID" value="BAE96740.1"/>
    <property type="molecule type" value="mRNA"/>
</dbReference>
<dbReference type="EMBL" id="AK044445">
    <property type="protein sequence ID" value="BAC31923.1"/>
    <property type="status" value="ALT_INIT"/>
    <property type="molecule type" value="mRNA"/>
</dbReference>
<dbReference type="EMBL" id="AK170454">
    <property type="protein sequence ID" value="BAE41809.1"/>
    <property type="molecule type" value="mRNA"/>
</dbReference>
<dbReference type="EMBL" id="BC089590">
    <property type="protein sequence ID" value="AAH89590.1"/>
    <property type="status" value="ALT_INIT"/>
    <property type="molecule type" value="mRNA"/>
</dbReference>
<dbReference type="CCDS" id="CCDS89911.1">
    <molecule id="Q18PE0-1"/>
</dbReference>
<dbReference type="CCDS" id="CCDS89912.1">
    <molecule id="Q18PE0-2"/>
</dbReference>
<dbReference type="RefSeq" id="NP_001335203.1">
    <molecule id="Q18PE0-1"/>
    <property type="nucleotide sequence ID" value="NM_001348274.1"/>
</dbReference>
<dbReference type="RefSeq" id="NP_001335204.1">
    <property type="nucleotide sequence ID" value="NM_001348275.1"/>
</dbReference>
<dbReference type="RefSeq" id="NP_001335205.1">
    <molecule id="Q18PE0-2"/>
    <property type="nucleotide sequence ID" value="NM_001348276.1"/>
</dbReference>
<dbReference type="RefSeq" id="NP_001335407.1">
    <molecule id="Q18PE0-3"/>
    <property type="nucleotide sequence ID" value="NM_001348478.1"/>
</dbReference>
<dbReference type="RefSeq" id="XP_006503961.1">
    <property type="nucleotide sequence ID" value="XM_006503898.3"/>
</dbReference>
<dbReference type="RefSeq" id="XP_006503963.1">
    <property type="nucleotide sequence ID" value="XM_006503900.2"/>
</dbReference>
<dbReference type="PDB" id="3ML4">
    <property type="method" value="X-ray"/>
    <property type="resolution" value="2.60 A"/>
    <property type="chains" value="A/B/C/D=1-220"/>
</dbReference>
<dbReference type="PDBsum" id="3ML4"/>
<dbReference type="SMR" id="Q18PE0"/>
<dbReference type="BioGRID" id="231089">
    <property type="interactions" value="1"/>
</dbReference>
<dbReference type="CORUM" id="Q18PE0"/>
<dbReference type="ELM" id="Q18PE0"/>
<dbReference type="FunCoup" id="Q18PE0">
    <property type="interactions" value="187"/>
</dbReference>
<dbReference type="IntAct" id="Q18PE0">
    <property type="interactions" value="2"/>
</dbReference>
<dbReference type="STRING" id="10090.ENSMUSP00000059538"/>
<dbReference type="GlyGen" id="Q18PE0">
    <property type="glycosylation" value="2 sites"/>
</dbReference>
<dbReference type="iPTMnet" id="Q18PE0"/>
<dbReference type="PhosphoSitePlus" id="Q18PE0"/>
<dbReference type="PaxDb" id="10090-ENSMUSP00000059538"/>
<dbReference type="ProteomicsDB" id="277394">
    <molecule id="Q18PE0-1"/>
</dbReference>
<dbReference type="ProteomicsDB" id="277395">
    <molecule id="Q18PE0-2"/>
</dbReference>
<dbReference type="ProteomicsDB" id="277396">
    <molecule id="Q18PE0-3"/>
</dbReference>
<dbReference type="Antibodypedia" id="55035">
    <property type="antibodies" value="444 antibodies from 28 providers"/>
</dbReference>
<dbReference type="DNASU" id="231134"/>
<dbReference type="Ensembl" id="ENSMUST00000101298.9">
    <molecule id="Q18PE0-2"/>
    <property type="protein sequence ID" value="ENSMUSP00000098856.3"/>
    <property type="gene ID" value="ENSMUSG00000044716.13"/>
</dbReference>
<dbReference type="Ensembl" id="ENSMUST00000114270.8">
    <molecule id="Q18PE0-1"/>
    <property type="protein sequence ID" value="ENSMUSP00000109909.2"/>
    <property type="gene ID" value="ENSMUSG00000044716.13"/>
</dbReference>
<dbReference type="GeneID" id="231134"/>
<dbReference type="KEGG" id="mmu:231134"/>
<dbReference type="UCSC" id="uc008xdk.1">
    <molecule id="Q18PE0-1"/>
    <property type="organism name" value="mouse"/>
</dbReference>
<dbReference type="UCSC" id="uc008xdl.1">
    <molecule id="Q18PE0-2"/>
    <property type="organism name" value="mouse"/>
</dbReference>
<dbReference type="UCSC" id="uc008xdm.1">
    <molecule id="Q18PE0-3"/>
    <property type="organism name" value="mouse"/>
</dbReference>
<dbReference type="AGR" id="MGI:3584043"/>
<dbReference type="CTD" id="285489"/>
<dbReference type="MGI" id="MGI:3584043">
    <property type="gene designation" value="Dok7"/>
</dbReference>
<dbReference type="VEuPathDB" id="HostDB:ENSMUSG00000044716"/>
<dbReference type="eggNOG" id="ENOG502QQBI">
    <property type="taxonomic scope" value="Eukaryota"/>
</dbReference>
<dbReference type="GeneTree" id="ENSGT00390000015386"/>
<dbReference type="HOGENOM" id="CLU_024931_1_0_1"/>
<dbReference type="InParanoid" id="Q18PE0"/>
<dbReference type="OrthoDB" id="6537982at2759"/>
<dbReference type="PhylomeDB" id="Q18PE0"/>
<dbReference type="TreeFam" id="TF332288"/>
<dbReference type="BioGRID-ORCS" id="231134">
    <property type="hits" value="1 hit in 63 CRISPR screens"/>
</dbReference>
<dbReference type="ChiTaRS" id="Dok7">
    <property type="organism name" value="mouse"/>
</dbReference>
<dbReference type="EvolutionaryTrace" id="Q18PE0"/>
<dbReference type="PRO" id="PR:Q18PE0"/>
<dbReference type="Proteomes" id="UP000000589">
    <property type="component" value="Chromosome 5"/>
</dbReference>
<dbReference type="RNAct" id="Q18PE0">
    <property type="molecule type" value="protein"/>
</dbReference>
<dbReference type="Bgee" id="ENSMUSG00000044716">
    <property type="expression patterns" value="Expressed in interventricular septum and 148 other cell types or tissues"/>
</dbReference>
<dbReference type="ExpressionAtlas" id="Q18PE0">
    <property type="expression patterns" value="baseline and differential"/>
</dbReference>
<dbReference type="GO" id="GO:0005739">
    <property type="term" value="C:mitochondrion"/>
    <property type="evidence" value="ECO:0007669"/>
    <property type="project" value="Ensembl"/>
</dbReference>
<dbReference type="GO" id="GO:0031594">
    <property type="term" value="C:neuromuscular junction"/>
    <property type="evidence" value="ECO:0000314"/>
    <property type="project" value="MGI"/>
</dbReference>
<dbReference type="GO" id="GO:0005654">
    <property type="term" value="C:nucleoplasm"/>
    <property type="evidence" value="ECO:0007669"/>
    <property type="project" value="Ensembl"/>
</dbReference>
<dbReference type="GO" id="GO:0045211">
    <property type="term" value="C:postsynaptic membrane"/>
    <property type="evidence" value="ECO:0000314"/>
    <property type="project" value="MGI"/>
</dbReference>
<dbReference type="GO" id="GO:0035091">
    <property type="term" value="F:phosphatidylinositol binding"/>
    <property type="evidence" value="ECO:0000314"/>
    <property type="project" value="UniProtKB"/>
</dbReference>
<dbReference type="GO" id="GO:0019901">
    <property type="term" value="F:protein kinase binding"/>
    <property type="evidence" value="ECO:0000314"/>
    <property type="project" value="UniProtKB"/>
</dbReference>
<dbReference type="GO" id="GO:0035591">
    <property type="term" value="F:signaling adaptor activity"/>
    <property type="evidence" value="ECO:0000314"/>
    <property type="project" value="MGI"/>
</dbReference>
<dbReference type="GO" id="GO:0007167">
    <property type="term" value="P:enzyme-linked receptor protein signaling pathway"/>
    <property type="evidence" value="ECO:0000314"/>
    <property type="project" value="MGI"/>
</dbReference>
<dbReference type="GO" id="GO:0007528">
    <property type="term" value="P:neuromuscular junction development"/>
    <property type="evidence" value="ECO:0000314"/>
    <property type="project" value="MGI"/>
</dbReference>
<dbReference type="GO" id="GO:0061098">
    <property type="term" value="P:positive regulation of protein tyrosine kinase activity"/>
    <property type="evidence" value="ECO:0000314"/>
    <property type="project" value="UniProtKB"/>
</dbReference>
<dbReference type="GO" id="GO:0035022">
    <property type="term" value="P:positive regulation of Rac protein signal transduction"/>
    <property type="evidence" value="ECO:0000314"/>
    <property type="project" value="MGI"/>
</dbReference>
<dbReference type="GO" id="GO:1904395">
    <property type="term" value="P:positive regulation of skeletal muscle acetylcholine-gated channel clustering"/>
    <property type="evidence" value="ECO:0000314"/>
    <property type="project" value="MGI"/>
</dbReference>
<dbReference type="GO" id="GO:0043113">
    <property type="term" value="P:receptor clustering"/>
    <property type="evidence" value="ECO:0000314"/>
    <property type="project" value="MGI"/>
</dbReference>
<dbReference type="CDD" id="cd14677">
    <property type="entry name" value="PH_DOK7"/>
    <property type="match status" value="1"/>
</dbReference>
<dbReference type="CDD" id="cd13165">
    <property type="entry name" value="PTB_DOK7"/>
    <property type="match status" value="1"/>
</dbReference>
<dbReference type="FunFam" id="2.30.29.30:FF:000275">
    <property type="entry name" value="Docking protein 7"/>
    <property type="match status" value="1"/>
</dbReference>
<dbReference type="FunFam" id="2.30.29.30:FF:000336">
    <property type="entry name" value="protein Dok-7 isoform X2"/>
    <property type="match status" value="1"/>
</dbReference>
<dbReference type="Gene3D" id="2.30.29.30">
    <property type="entry name" value="Pleckstrin-homology domain (PH domain)/Phosphotyrosine-binding domain (PTB)"/>
    <property type="match status" value="2"/>
</dbReference>
<dbReference type="InterPro" id="IPR037746">
    <property type="entry name" value="Dok-7"/>
</dbReference>
<dbReference type="InterPro" id="IPR037747">
    <property type="entry name" value="Dok-7_PH"/>
</dbReference>
<dbReference type="InterPro" id="IPR037748">
    <property type="entry name" value="Dok-7_PTB"/>
</dbReference>
<dbReference type="InterPro" id="IPR002404">
    <property type="entry name" value="IRS_PTB"/>
</dbReference>
<dbReference type="InterPro" id="IPR011993">
    <property type="entry name" value="PH-like_dom_sf"/>
</dbReference>
<dbReference type="InterPro" id="IPR001849">
    <property type="entry name" value="PH_domain"/>
</dbReference>
<dbReference type="PANTHER" id="PTHR21636">
    <property type="entry name" value="PROTEIN DOK-7"/>
    <property type="match status" value="1"/>
</dbReference>
<dbReference type="PANTHER" id="PTHR21636:SF2">
    <property type="entry name" value="PROTEIN DOK-7"/>
    <property type="match status" value="1"/>
</dbReference>
<dbReference type="Pfam" id="PF02174">
    <property type="entry name" value="IRS"/>
    <property type="match status" value="1"/>
</dbReference>
<dbReference type="SMART" id="SM01244">
    <property type="entry name" value="IRS"/>
    <property type="match status" value="1"/>
</dbReference>
<dbReference type="SMART" id="SM00233">
    <property type="entry name" value="PH"/>
    <property type="match status" value="1"/>
</dbReference>
<dbReference type="SUPFAM" id="SSF50729">
    <property type="entry name" value="PH domain-like"/>
    <property type="match status" value="2"/>
</dbReference>
<dbReference type="PROSITE" id="PS51064">
    <property type="entry name" value="IRS_PTB"/>
    <property type="match status" value="1"/>
</dbReference>
<dbReference type="PROSITE" id="PS50003">
    <property type="entry name" value="PH_DOMAIN"/>
    <property type="match status" value="1"/>
</dbReference>
<accession>Q18PE0</accession>
<accession>Q3TCZ6</accession>
<accession>Q5FW70</accession>
<accession>Q8C8U7</accession>
<feature type="chain" id="PRO_0000250372" description="Protein Dok-7">
    <location>
        <begin position="1"/>
        <end position="504"/>
    </location>
</feature>
<feature type="domain" description="PH" evidence="1">
    <location>
        <begin position="4"/>
        <end position="109"/>
    </location>
</feature>
<feature type="domain" description="IRS-type PTB" evidence="2">
    <location>
        <begin position="105"/>
        <end position="210"/>
    </location>
</feature>
<feature type="region of interest" description="Disordered" evidence="3">
    <location>
        <begin position="210"/>
        <end position="232"/>
    </location>
</feature>
<feature type="region of interest" description="Disordered" evidence="3">
    <location>
        <begin position="248"/>
        <end position="348"/>
    </location>
</feature>
<feature type="region of interest" description="Disordered" evidence="3">
    <location>
        <begin position="371"/>
        <end position="483"/>
    </location>
</feature>
<feature type="compositionally biased region" description="Low complexity" evidence="3">
    <location>
        <begin position="263"/>
        <end position="280"/>
    </location>
</feature>
<feature type="compositionally biased region" description="Polar residues" evidence="3">
    <location>
        <begin position="285"/>
        <end position="297"/>
    </location>
</feature>
<feature type="compositionally biased region" description="Polar residues" evidence="3">
    <location>
        <begin position="331"/>
        <end position="341"/>
    </location>
</feature>
<feature type="compositionally biased region" description="Polar residues" evidence="3">
    <location>
        <begin position="421"/>
        <end position="430"/>
    </location>
</feature>
<feature type="splice variant" id="VSP_020636" description="In isoform 2." evidence="6">
    <original>DCLLMLVYKDKCERSKGLRERSSLTLEDICGLEPALPYEGLAHTLAIICLSQAVMLGFDSHEAMCAWDTRIRYALGEVHRFHVTVAPGTKLESGPATLHLCNDILVLARDIPPTVMGQWKLSDLRRYGAVPNGFIFEGGTRCGYW</original>
    <variation>G</variation>
    <location>
        <begin position="34"/>
        <end position="178"/>
    </location>
</feature>
<feature type="splice variant" id="VSP_020637" description="In isoform 3." evidence="6">
    <original>KPPP</original>
    <variation>MATSSPGFTVTHPGSPGRVAADSPGPERPHSEMPTYVNIPISPISRPQLHYMDLELPGASAGVRGASTSRYAQIDIAATETAHRVGVRHAQTREERLPELEQRKKGP</variation>
    <location>
        <begin position="501"/>
        <end position="504"/>
    </location>
</feature>
<feature type="mutagenesis site" description="Abolishes interaction with MUSK and function; when associated with A-174." evidence="4">
    <original>RR</original>
    <variation>AA</variation>
    <location>
        <begin position="158"/>
        <end position="159"/>
    </location>
</feature>
<feature type="mutagenesis site" description="Abolishes interaction with MUSK and function; when associated with A-158 and A-159." evidence="4">
    <original>R</original>
    <variation>A</variation>
    <location>
        <position position="174"/>
    </location>
</feature>
<feature type="strand" evidence="8">
    <location>
        <begin position="6"/>
        <end position="13"/>
    </location>
</feature>
<feature type="strand" evidence="8">
    <location>
        <begin position="15"/>
        <end position="17"/>
    </location>
</feature>
<feature type="strand" evidence="8">
    <location>
        <begin position="20"/>
        <end position="27"/>
    </location>
</feature>
<feature type="strand" evidence="8">
    <location>
        <begin position="36"/>
        <end position="44"/>
    </location>
</feature>
<feature type="helix" evidence="8">
    <location>
        <begin position="45"/>
        <end position="48"/>
    </location>
</feature>
<feature type="strand" evidence="8">
    <location>
        <begin position="54"/>
        <end position="59"/>
    </location>
</feature>
<feature type="strand" evidence="8">
    <location>
        <begin position="62"/>
        <end position="71"/>
    </location>
</feature>
<feature type="strand" evidence="8">
    <location>
        <begin position="74"/>
        <end position="84"/>
    </location>
</feature>
<feature type="strand" evidence="8">
    <location>
        <begin position="86"/>
        <end position="90"/>
    </location>
</feature>
<feature type="helix" evidence="8">
    <location>
        <begin position="94"/>
        <end position="107"/>
    </location>
</feature>
<feature type="strand" evidence="8">
    <location>
        <begin position="109"/>
        <end position="118"/>
    </location>
</feature>
<feature type="strand" evidence="8">
    <location>
        <begin position="120"/>
        <end position="124"/>
    </location>
</feature>
<feature type="strand" evidence="8">
    <location>
        <begin position="127"/>
        <end position="134"/>
    </location>
</feature>
<feature type="strand" evidence="8">
    <location>
        <begin position="137"/>
        <end position="142"/>
    </location>
</feature>
<feature type="turn" evidence="8">
    <location>
        <begin position="143"/>
        <end position="146"/>
    </location>
</feature>
<feature type="strand" evidence="8">
    <location>
        <begin position="147"/>
        <end position="153"/>
    </location>
</feature>
<feature type="helix" evidence="8">
    <location>
        <begin position="154"/>
        <end position="156"/>
    </location>
</feature>
<feature type="strand" evidence="8">
    <location>
        <begin position="157"/>
        <end position="163"/>
    </location>
</feature>
<feature type="strand" evidence="8">
    <location>
        <begin position="166"/>
        <end position="171"/>
    </location>
</feature>
<feature type="helix" evidence="8">
    <location>
        <begin position="173"/>
        <end position="178"/>
    </location>
</feature>
<feature type="strand" evidence="8">
    <location>
        <begin position="180"/>
        <end position="185"/>
    </location>
</feature>
<feature type="helix" evidence="8">
    <location>
        <begin position="189"/>
        <end position="199"/>
    </location>
</feature>
<feature type="turn" evidence="8">
    <location>
        <begin position="200"/>
        <end position="202"/>
    </location>
</feature>
<feature type="turn" evidence="8">
    <location>
        <begin position="205"/>
        <end position="207"/>
    </location>
</feature>
<comment type="function">
    <text evidence="4 5">Probable muscle-intrinsic activator of MUSK that plays an essential role in neuromuscular synaptogenesis. Acts in aneural activation of MUSK and subsequent acetylcholine receptor (AchR) clustering in myotubes. Induces autophosphorylation of MUSK.</text>
</comment>
<comment type="subunit">
    <text evidence="4 5">Homodimer. Forms a heterotetramer composed of 2 DOK7 and 2 MUSK molecules which facilitates MUSK trans-autophosphorylation on tyrosine residue and activation. Interacts (via IRS-type PTB domain) with MUSK (via cytoplasmic part); requires MUSK phosphorylation.</text>
</comment>
<comment type="interaction">
    <interactant intactId="EBI-3989091">
        <id>Q18PE0</id>
    </interactant>
    <interactant intactId="EBI-3989087">
        <id>Q61006</id>
        <label>Musk</label>
    </interactant>
    <organismsDiffer>false</organismsDiffer>
    <experiments>3</experiments>
</comment>
<comment type="subcellular location">
    <subcellularLocation>
        <location evidence="4">Cell membrane</location>
        <topology evidence="4">Peripheral membrane protein</topology>
    </subcellularLocation>
    <subcellularLocation>
        <location evidence="4">Synapse</location>
    </subcellularLocation>
    <text>Accumulates at neuromuscular junctions.</text>
</comment>
<comment type="alternative products">
    <event type="alternative splicing"/>
    <isoform>
        <id>Q18PE0-1</id>
        <name>1</name>
        <sequence type="displayed"/>
    </isoform>
    <isoform>
        <id>Q18PE0-2</id>
        <name>2</name>
        <sequence type="described" ref="VSP_020636"/>
    </isoform>
    <isoform>
        <id>Q18PE0-3</id>
        <name>3</name>
        <sequence type="described" ref="VSP_020637"/>
    </isoform>
</comment>
<comment type="developmental stage">
    <text evidence="4">Expressed in the central region encompassing the endplate area of the diaphragm muscles at day 14.5 of embryonic development (14.5 dpc), when AChRs cluster in a nerve- and agrin-independent manner.</text>
</comment>
<comment type="domain">
    <text evidence="5">The PH domain mediated binding to phospholipids with phosphoinositol headgroups. Affinity is highest for phosphatidyl 3,4,5-trisphosphate, followed by phosphatidylinositol 3,4-bisphosphate and phosphatidylinositol 4,5-bisphosphate.</text>
</comment>
<comment type="disruption phenotype">
    <text evidence="4">Mice are immobile at birth and die shortly thereafter. They do not form neither acetylcholine receptor clusters nor neuromuscular synapses.</text>
</comment>
<comment type="sequence caution" evidence="7">
    <conflict type="erroneous initiation">
        <sequence resource="EMBL-CDS" id="AAH89590"/>
    </conflict>
</comment>
<comment type="sequence caution" evidence="7">
    <conflict type="erroneous initiation">
        <sequence resource="EMBL-CDS" id="BAC31923"/>
    </conflict>
</comment>
<organism>
    <name type="scientific">Mus musculus</name>
    <name type="common">Mouse</name>
    <dbReference type="NCBI Taxonomy" id="10090"/>
    <lineage>
        <taxon>Eukaryota</taxon>
        <taxon>Metazoa</taxon>
        <taxon>Chordata</taxon>
        <taxon>Craniata</taxon>
        <taxon>Vertebrata</taxon>
        <taxon>Euteleostomi</taxon>
        <taxon>Mammalia</taxon>
        <taxon>Eutheria</taxon>
        <taxon>Euarchontoglires</taxon>
        <taxon>Glires</taxon>
        <taxon>Rodentia</taxon>
        <taxon>Myomorpha</taxon>
        <taxon>Muroidea</taxon>
        <taxon>Muridae</taxon>
        <taxon>Murinae</taxon>
        <taxon>Mus</taxon>
        <taxon>Mus</taxon>
    </lineage>
</organism>
<keyword id="KW-0002">3D-structure</keyword>
<keyword id="KW-0025">Alternative splicing</keyword>
<keyword id="KW-1003">Cell membrane</keyword>
<keyword id="KW-0446">Lipid-binding</keyword>
<keyword id="KW-0472">Membrane</keyword>
<keyword id="KW-1185">Reference proteome</keyword>
<keyword id="KW-0770">Synapse</keyword>
<reference key="1">
    <citation type="journal article" date="2006" name="Science">
        <title>The muscle protein Dok-7 is essential for neuromuscular synaptogenesis.</title>
        <authorList>
            <person name="Okada K."/>
            <person name="Inoue A."/>
            <person name="Okada M."/>
            <person name="Murata Y."/>
            <person name="Kakuta S."/>
            <person name="Jigami T."/>
            <person name="Kubo S."/>
            <person name="Shiraishi H."/>
            <person name="Eguchi K."/>
            <person name="Motomura M."/>
            <person name="Akiyama T."/>
            <person name="Iwakura Y."/>
            <person name="Higuchi O."/>
            <person name="Yamanashi Y."/>
        </authorList>
    </citation>
    <scope>NUCLEOTIDE SEQUENCE [MRNA] (ISOFORM 1)</scope>
    <scope>FUNCTION</scope>
    <scope>SUBCELLULAR LOCATION</scope>
    <scope>INTERACTION WITH MUSK</scope>
    <scope>DEVELOPMENTAL STAGE</scope>
    <scope>DISRUPTION PHENOTYPE</scope>
    <scope>MUTAGENESIS OF 158-ARG-ARG-159 AND ARG-174</scope>
    <source>
        <strain>C57BL/6J</strain>
    </source>
</reference>
<reference key="2">
    <citation type="journal article" date="2005" name="Science">
        <title>The transcriptional landscape of the mammalian genome.</title>
        <authorList>
            <person name="Carninci P."/>
            <person name="Kasukawa T."/>
            <person name="Katayama S."/>
            <person name="Gough J."/>
            <person name="Frith M.C."/>
            <person name="Maeda N."/>
            <person name="Oyama R."/>
            <person name="Ravasi T."/>
            <person name="Lenhard B."/>
            <person name="Wells C."/>
            <person name="Kodzius R."/>
            <person name="Shimokawa K."/>
            <person name="Bajic V.B."/>
            <person name="Brenner S.E."/>
            <person name="Batalov S."/>
            <person name="Forrest A.R."/>
            <person name="Zavolan M."/>
            <person name="Davis M.J."/>
            <person name="Wilming L.G."/>
            <person name="Aidinis V."/>
            <person name="Allen J.E."/>
            <person name="Ambesi-Impiombato A."/>
            <person name="Apweiler R."/>
            <person name="Aturaliya R.N."/>
            <person name="Bailey T.L."/>
            <person name="Bansal M."/>
            <person name="Baxter L."/>
            <person name="Beisel K.W."/>
            <person name="Bersano T."/>
            <person name="Bono H."/>
            <person name="Chalk A.M."/>
            <person name="Chiu K.P."/>
            <person name="Choudhary V."/>
            <person name="Christoffels A."/>
            <person name="Clutterbuck D.R."/>
            <person name="Crowe M.L."/>
            <person name="Dalla E."/>
            <person name="Dalrymple B.P."/>
            <person name="de Bono B."/>
            <person name="Della Gatta G."/>
            <person name="di Bernardo D."/>
            <person name="Down T."/>
            <person name="Engstrom P."/>
            <person name="Fagiolini M."/>
            <person name="Faulkner G."/>
            <person name="Fletcher C.F."/>
            <person name="Fukushima T."/>
            <person name="Furuno M."/>
            <person name="Futaki S."/>
            <person name="Gariboldi M."/>
            <person name="Georgii-Hemming P."/>
            <person name="Gingeras T.R."/>
            <person name="Gojobori T."/>
            <person name="Green R.E."/>
            <person name="Gustincich S."/>
            <person name="Harbers M."/>
            <person name="Hayashi Y."/>
            <person name="Hensch T.K."/>
            <person name="Hirokawa N."/>
            <person name="Hill D."/>
            <person name="Huminiecki L."/>
            <person name="Iacono M."/>
            <person name="Ikeo K."/>
            <person name="Iwama A."/>
            <person name="Ishikawa T."/>
            <person name="Jakt M."/>
            <person name="Kanapin A."/>
            <person name="Katoh M."/>
            <person name="Kawasawa Y."/>
            <person name="Kelso J."/>
            <person name="Kitamura H."/>
            <person name="Kitano H."/>
            <person name="Kollias G."/>
            <person name="Krishnan S.P."/>
            <person name="Kruger A."/>
            <person name="Kummerfeld S.K."/>
            <person name="Kurochkin I.V."/>
            <person name="Lareau L.F."/>
            <person name="Lazarevic D."/>
            <person name="Lipovich L."/>
            <person name="Liu J."/>
            <person name="Liuni S."/>
            <person name="McWilliam S."/>
            <person name="Madan Babu M."/>
            <person name="Madera M."/>
            <person name="Marchionni L."/>
            <person name="Matsuda H."/>
            <person name="Matsuzawa S."/>
            <person name="Miki H."/>
            <person name="Mignone F."/>
            <person name="Miyake S."/>
            <person name="Morris K."/>
            <person name="Mottagui-Tabar S."/>
            <person name="Mulder N."/>
            <person name="Nakano N."/>
            <person name="Nakauchi H."/>
            <person name="Ng P."/>
            <person name="Nilsson R."/>
            <person name="Nishiguchi S."/>
            <person name="Nishikawa S."/>
            <person name="Nori F."/>
            <person name="Ohara O."/>
            <person name="Okazaki Y."/>
            <person name="Orlando V."/>
            <person name="Pang K.C."/>
            <person name="Pavan W.J."/>
            <person name="Pavesi G."/>
            <person name="Pesole G."/>
            <person name="Petrovsky N."/>
            <person name="Piazza S."/>
            <person name="Reed J."/>
            <person name="Reid J.F."/>
            <person name="Ring B.Z."/>
            <person name="Ringwald M."/>
            <person name="Rost B."/>
            <person name="Ruan Y."/>
            <person name="Salzberg S.L."/>
            <person name="Sandelin A."/>
            <person name="Schneider C."/>
            <person name="Schoenbach C."/>
            <person name="Sekiguchi K."/>
            <person name="Semple C.A."/>
            <person name="Seno S."/>
            <person name="Sessa L."/>
            <person name="Sheng Y."/>
            <person name="Shibata Y."/>
            <person name="Shimada H."/>
            <person name="Shimada K."/>
            <person name="Silva D."/>
            <person name="Sinclair B."/>
            <person name="Sperling S."/>
            <person name="Stupka E."/>
            <person name="Sugiura K."/>
            <person name="Sultana R."/>
            <person name="Takenaka Y."/>
            <person name="Taki K."/>
            <person name="Tammoja K."/>
            <person name="Tan S.L."/>
            <person name="Tang S."/>
            <person name="Taylor M.S."/>
            <person name="Tegner J."/>
            <person name="Teichmann S.A."/>
            <person name="Ueda H.R."/>
            <person name="van Nimwegen E."/>
            <person name="Verardo R."/>
            <person name="Wei C.L."/>
            <person name="Yagi K."/>
            <person name="Yamanishi H."/>
            <person name="Zabarovsky E."/>
            <person name="Zhu S."/>
            <person name="Zimmer A."/>
            <person name="Hide W."/>
            <person name="Bult C."/>
            <person name="Grimmond S.M."/>
            <person name="Teasdale R.D."/>
            <person name="Liu E.T."/>
            <person name="Brusic V."/>
            <person name="Quackenbush J."/>
            <person name="Wahlestedt C."/>
            <person name="Mattick J.S."/>
            <person name="Hume D.A."/>
            <person name="Kai C."/>
            <person name="Sasaki D."/>
            <person name="Tomaru Y."/>
            <person name="Fukuda S."/>
            <person name="Kanamori-Katayama M."/>
            <person name="Suzuki M."/>
            <person name="Aoki J."/>
            <person name="Arakawa T."/>
            <person name="Iida J."/>
            <person name="Imamura K."/>
            <person name="Itoh M."/>
            <person name="Kato T."/>
            <person name="Kawaji H."/>
            <person name="Kawagashira N."/>
            <person name="Kawashima T."/>
            <person name="Kojima M."/>
            <person name="Kondo S."/>
            <person name="Konno H."/>
            <person name="Nakano K."/>
            <person name="Ninomiya N."/>
            <person name="Nishio T."/>
            <person name="Okada M."/>
            <person name="Plessy C."/>
            <person name="Shibata K."/>
            <person name="Shiraki T."/>
            <person name="Suzuki S."/>
            <person name="Tagami M."/>
            <person name="Waki K."/>
            <person name="Watahiki A."/>
            <person name="Okamura-Oho Y."/>
            <person name="Suzuki H."/>
            <person name="Kawai J."/>
            <person name="Hayashizaki Y."/>
        </authorList>
    </citation>
    <scope>NUCLEOTIDE SEQUENCE [LARGE SCALE MRNA] (ISOFORM 2)</scope>
    <scope>NUCLEOTIDE SEQUENCE [LARGE SCALE MRNA] OF 19-504 (ISOFORM 3)</scope>
    <source>
        <strain>C57BL/6J</strain>
        <strain>NOD</strain>
        <tissue>Retina</tissue>
    </source>
</reference>
<reference key="3">
    <citation type="journal article" date="2004" name="Genome Res.">
        <title>The status, quality, and expansion of the NIH full-length cDNA project: the Mammalian Gene Collection (MGC).</title>
        <authorList>
            <consortium name="The MGC Project Team"/>
        </authorList>
    </citation>
    <scope>NUCLEOTIDE SEQUENCE [LARGE SCALE MRNA] (ISOFORM 1)</scope>
    <source>
        <tissue>Heart</tissue>
    </source>
</reference>
<reference key="4">
    <citation type="journal article" date="2010" name="Mol. Cell">
        <title>The cytoplasmic adaptor protein Dok7 activates the receptor tyrosine kinase MuSK via dimerization.</title>
        <authorList>
            <person name="Bergamin E."/>
            <person name="Hallock P.T."/>
            <person name="Burden S.J."/>
            <person name="Hubbard S.R."/>
        </authorList>
    </citation>
    <scope>X-RAY CRYSTALLOGRAPHY (2.6 ANGSTROMS) OF 1-220 IN COMPLEX WITH MUSK PEPTIDE</scope>
    <scope>HOMODIMERIZATION</scope>
    <scope>FUNCTION IN MUSK AUTOPHOSPHORYLATION</scope>
    <scope>DOMAIN</scope>
    <scope>INTERACTION WITH MUSK</scope>
</reference>
<proteinExistence type="evidence at protein level"/>
<gene>
    <name type="primary">Dok7</name>
</gene>
<evidence type="ECO:0000255" key="1">
    <source>
        <dbReference type="PROSITE-ProRule" id="PRU00145"/>
    </source>
</evidence>
<evidence type="ECO:0000255" key="2">
    <source>
        <dbReference type="PROSITE-ProRule" id="PRU00389"/>
    </source>
</evidence>
<evidence type="ECO:0000256" key="3">
    <source>
        <dbReference type="SAM" id="MobiDB-lite"/>
    </source>
</evidence>
<evidence type="ECO:0000269" key="4">
    <source>
    </source>
</evidence>
<evidence type="ECO:0000269" key="5">
    <source>
    </source>
</evidence>
<evidence type="ECO:0000303" key="6">
    <source>
    </source>
</evidence>
<evidence type="ECO:0000305" key="7"/>
<evidence type="ECO:0007829" key="8">
    <source>
        <dbReference type="PDB" id="3ML4"/>
    </source>
</evidence>
<sequence length="504" mass="53177">MTEAALVEGQVKLRDGKKWKSRWLVLRKPSPVADCLLMLVYKDKCERSKGLRERSSLTLEDICGLEPALPYEGLAHTLAIICLSQAVMLGFDSHEAMCAWDTRIRYALGEVHRFHVTVAPGTKLESGPATLHLCNDILVLARDIPPTVMGQWKLSDLRRYGAVPNGFIFEGGTRCGYWAGVFFLSSAEGEQMSFLFDCIVRGISPTKGPFGLRPVLPDPSSGGPSASEERVAQEALEALQLEKRLSLLSHSGRPGSGGDDRSLSSSSSEASHSDISASSRLTAWPEQSSSSAGTSQEGPGLVAAQGPGEAMLGASRPPLKPLRPRQLQEVGRQSSSDSGIATGSHSSYSGSFSSYAGSNLDVWRAGEEFGSLLSLPPGASAPEPRLCACPPGAAEYQVPTSLRHHYDTPRSLRQAPRDPSPASQGSSDHGSATDLGGQAPTGCPSSWLGARRRGQATEGPGSDAALPSPSPGESWEAGSPHAGPPPAFFLSCSICGGLKVKPPP</sequence>
<name>DOK7_MOUSE</name>